<comment type="function">
    <text evidence="1">Factor Xa is a vitamin K-dependent glycoprotein that converts prothrombin to thrombin in the presence of factor Va, calcium and phospholipid during blood clotting.</text>
</comment>
<comment type="catalytic activity">
    <reaction>
        <text>Selective cleavage of Arg-|-Thr and then Arg-|-Ile bonds in prothrombin to form thrombin.</text>
        <dbReference type="EC" id="3.4.21.6"/>
    </reaction>
</comment>
<comment type="subunit">
    <text evidence="1">Heterodimer of a light chain and a heavy chain; disulfide-linked.</text>
</comment>
<comment type="subcellular location">
    <subcellularLocation>
        <location evidence="1">Secreted</location>
    </subcellularLocation>
</comment>
<comment type="tissue specificity">
    <text evidence="6">Plasma; synthesized in the liver.</text>
</comment>
<comment type="PTM">
    <text>Gamma-carboxyglutamate residues are formed by vitamin K dependent carboxylation. These residues are essential for the binding of calcium.</text>
</comment>
<comment type="PTM">
    <text evidence="1">The activation peptide is cleaved by factor IXa (in the intrinsic pathway), or by factor VIIa (in the extrinsic pathway).</text>
</comment>
<comment type="PTM">
    <text evidence="1">The iron and 2-oxoglutarate dependent 3-hydroxylation of aspartate and asparagine is (R) stereospecific within EGF domains.</text>
</comment>
<comment type="similarity">
    <text evidence="4">Belongs to the peptidase S1 family.</text>
</comment>
<comment type="online information" name="Wikipedia">
    <link uri="https://en.wikipedia.org/wiki/Factor_X"/>
    <text>Factor X entry</text>
</comment>
<feature type="signal peptide" evidence="2">
    <location>
        <begin position="1"/>
        <end position="20"/>
    </location>
</feature>
<feature type="propeptide" id="PRO_0000409914" evidence="1">
    <location>
        <begin position="21"/>
        <end position="40"/>
    </location>
</feature>
<feature type="chain" id="PRO_0000409915" description="Coagulation factor X isoform 1">
    <location>
        <begin position="41"/>
        <end position="483"/>
    </location>
</feature>
<feature type="chain" id="PRO_0000409916" description="Factor X light chain">
    <location>
        <begin position="41"/>
        <end position="180"/>
    </location>
</feature>
<feature type="chain" id="PRO_0000409917" description="Factor X heavy chain">
    <location>
        <begin position="183"/>
        <end position="483"/>
    </location>
</feature>
<feature type="propeptide" id="PRO_0000409918" description="Activation peptide" evidence="1">
    <location>
        <begin position="183"/>
        <end position="238"/>
    </location>
</feature>
<feature type="chain" id="PRO_0000409919" description="Activated factor Xa heavy chain">
    <location>
        <begin position="239"/>
        <end position="483"/>
    </location>
</feature>
<feature type="domain" description="Gla" evidence="5">
    <location>
        <begin position="41"/>
        <end position="86"/>
    </location>
</feature>
<feature type="domain" description="EGF-like 1; calcium-binding" evidence="3">
    <location>
        <begin position="86"/>
        <end position="122"/>
    </location>
</feature>
<feature type="domain" description="EGF-like 2" evidence="3">
    <location>
        <begin position="125"/>
        <end position="165"/>
    </location>
</feature>
<feature type="domain" description="Peptidase S1" evidence="4">
    <location>
        <begin position="239"/>
        <end position="470"/>
    </location>
</feature>
<feature type="active site" description="Charge relay system" evidence="1">
    <location>
        <position position="280"/>
    </location>
</feature>
<feature type="active site" description="Charge relay system" evidence="1">
    <location>
        <position position="325"/>
    </location>
</feature>
<feature type="active site" description="Charge relay system" evidence="1">
    <location>
        <position position="422"/>
    </location>
</feature>
<feature type="modified residue" description="4-carboxyglutamate" evidence="5">
    <location>
        <position position="46"/>
    </location>
</feature>
<feature type="modified residue" description="4-carboxyglutamate" evidence="5">
    <location>
        <position position="47"/>
    </location>
</feature>
<feature type="modified residue" description="4-carboxyglutamate" evidence="5">
    <location>
        <position position="54"/>
    </location>
</feature>
<feature type="modified residue" description="4-carboxyglutamate" evidence="5">
    <location>
        <position position="56"/>
    </location>
</feature>
<feature type="modified residue" description="4-carboxyglutamate" evidence="5">
    <location>
        <position position="59"/>
    </location>
</feature>
<feature type="modified residue" description="4-carboxyglutamate" evidence="5">
    <location>
        <position position="60"/>
    </location>
</feature>
<feature type="modified residue" description="4-carboxyglutamate" evidence="5">
    <location>
        <position position="65"/>
    </location>
</feature>
<feature type="modified residue" description="4-carboxyglutamate" evidence="5">
    <location>
        <position position="66"/>
    </location>
</feature>
<feature type="modified residue" description="4-carboxyglutamate" evidence="5">
    <location>
        <position position="69"/>
    </location>
</feature>
<feature type="modified residue" description="4-carboxyglutamate" evidence="5">
    <location>
        <position position="72"/>
    </location>
</feature>
<feature type="modified residue" description="4-carboxyglutamate" evidence="5">
    <location>
        <position position="75"/>
    </location>
</feature>
<feature type="modified residue" description="(3R)-3-hydroxyaspartate" evidence="1">
    <location>
        <position position="103"/>
    </location>
</feature>
<feature type="glycosylation site" description="O-linked (Hex...) serine" evidence="1">
    <location>
        <position position="92"/>
    </location>
</feature>
<feature type="glycosylation site" description="N-linked (GlcNAc...) asparagine" evidence="2">
    <location>
        <position position="283"/>
    </location>
</feature>
<feature type="disulfide bond" evidence="1">
    <location>
        <begin position="57"/>
        <end position="62"/>
    </location>
</feature>
<feature type="disulfide bond" evidence="1">
    <location>
        <begin position="90"/>
        <end position="101"/>
    </location>
</feature>
<feature type="disulfide bond" evidence="1">
    <location>
        <begin position="95"/>
        <end position="110"/>
    </location>
</feature>
<feature type="disulfide bond" evidence="1">
    <location>
        <begin position="112"/>
        <end position="121"/>
    </location>
</feature>
<feature type="disulfide bond" evidence="1">
    <location>
        <begin position="129"/>
        <end position="140"/>
    </location>
</feature>
<feature type="disulfide bond" evidence="1">
    <location>
        <begin position="136"/>
        <end position="149"/>
    </location>
</feature>
<feature type="disulfide bond" evidence="1">
    <location>
        <begin position="151"/>
        <end position="164"/>
    </location>
</feature>
<feature type="disulfide bond" description="Interchain (between light and heavy chains)" evidence="3 4 5">
    <location>
        <begin position="172"/>
        <end position="345"/>
    </location>
</feature>
<feature type="disulfide bond" evidence="1">
    <location>
        <begin position="245"/>
        <end position="250"/>
    </location>
</feature>
<feature type="disulfide bond" evidence="1">
    <location>
        <begin position="265"/>
        <end position="281"/>
    </location>
</feature>
<feature type="disulfide bond" evidence="1">
    <location>
        <begin position="393"/>
        <end position="407"/>
    </location>
</feature>
<feature type="disulfide bond" evidence="1">
    <location>
        <begin position="418"/>
        <end position="446"/>
    </location>
</feature>
<protein>
    <recommendedName>
        <fullName>Coagulation factor X isoform 1</fullName>
        <shortName>PFX1</shortName>
        <ecNumber>3.4.21.6</ecNumber>
    </recommendedName>
    <component>
        <recommendedName>
            <fullName>Factor X light chain</fullName>
        </recommendedName>
    </component>
    <component>
        <recommendedName>
            <fullName>Factor X heavy chain</fullName>
        </recommendedName>
    </component>
    <component>
        <recommendedName>
            <fullName>Activated factor Xa heavy chain</fullName>
        </recommendedName>
    </component>
</protein>
<reference key="1">
    <citation type="journal article" date="2006" name="J. Thromb. Haemost.">
        <title>Molecular evolution caught in action: gene duplication and evolution of molecular isoforms of prothrombin activators in Pseudonaja textilis (brown snake).</title>
        <authorList>
            <person name="Reza M.A."/>
            <person name="Le T.N.M."/>
            <person name="Swarup S."/>
            <person name="Kini R.M."/>
        </authorList>
    </citation>
    <scope>NUCLEOTIDE SEQUENCE [MRNA]</scope>
    <scope>TISSUE SPECIFICITY</scope>
    <source>
        <tissue>Liver</tissue>
    </source>
</reference>
<accession>Q1L659</accession>
<organism>
    <name type="scientific">Pseudonaja textilis</name>
    <name type="common">Eastern brown snake</name>
    <dbReference type="NCBI Taxonomy" id="8673"/>
    <lineage>
        <taxon>Eukaryota</taxon>
        <taxon>Metazoa</taxon>
        <taxon>Chordata</taxon>
        <taxon>Craniata</taxon>
        <taxon>Vertebrata</taxon>
        <taxon>Euteleostomi</taxon>
        <taxon>Lepidosauria</taxon>
        <taxon>Squamata</taxon>
        <taxon>Bifurcata</taxon>
        <taxon>Unidentata</taxon>
        <taxon>Episquamata</taxon>
        <taxon>Toxicofera</taxon>
        <taxon>Serpentes</taxon>
        <taxon>Colubroidea</taxon>
        <taxon>Elapidae</taxon>
        <taxon>Hydrophiinae</taxon>
        <taxon>Pseudonaja</taxon>
    </lineage>
</organism>
<gene>
    <name type="primary">F10</name>
</gene>
<evidence type="ECO:0000250" key="1"/>
<evidence type="ECO:0000255" key="2"/>
<evidence type="ECO:0000255" key="3">
    <source>
        <dbReference type="PROSITE-ProRule" id="PRU00076"/>
    </source>
</evidence>
<evidence type="ECO:0000255" key="4">
    <source>
        <dbReference type="PROSITE-ProRule" id="PRU00274"/>
    </source>
</evidence>
<evidence type="ECO:0000255" key="5">
    <source>
        <dbReference type="PROSITE-ProRule" id="PRU00463"/>
    </source>
</evidence>
<evidence type="ECO:0000269" key="6">
    <source>
    </source>
</evidence>
<keyword id="KW-0094">Blood coagulation</keyword>
<keyword id="KW-0106">Calcium</keyword>
<keyword id="KW-0165">Cleavage on pair of basic residues</keyword>
<keyword id="KW-1015">Disulfide bond</keyword>
<keyword id="KW-0245">EGF-like domain</keyword>
<keyword id="KW-0301">Gamma-carboxyglutamic acid</keyword>
<keyword id="KW-0325">Glycoprotein</keyword>
<keyword id="KW-0356">Hemostasis</keyword>
<keyword id="KW-0378">Hydrolase</keyword>
<keyword id="KW-0379">Hydroxylation</keyword>
<keyword id="KW-0645">Protease</keyword>
<keyword id="KW-1185">Reference proteome</keyword>
<keyword id="KW-0677">Repeat</keyword>
<keyword id="KW-0964">Secreted</keyword>
<keyword id="KW-0720">Serine protease</keyword>
<keyword id="KW-0732">Signal</keyword>
<keyword id="KW-0865">Zymogen</keyword>
<dbReference type="EC" id="3.4.21.6"/>
<dbReference type="EMBL" id="DQ017705">
    <property type="protein sequence ID" value="AAY85307.1"/>
    <property type="molecule type" value="mRNA"/>
</dbReference>
<dbReference type="SMR" id="Q1L659"/>
<dbReference type="MEROPS" id="S01.396"/>
<dbReference type="GlyCosmos" id="Q1L659">
    <property type="glycosylation" value="2 sites, No reported glycans"/>
</dbReference>
<dbReference type="Proteomes" id="UP000472273">
    <property type="component" value="Unplaced"/>
</dbReference>
<dbReference type="GO" id="GO:0005615">
    <property type="term" value="C:extracellular space"/>
    <property type="evidence" value="ECO:0007669"/>
    <property type="project" value="TreeGrafter"/>
</dbReference>
<dbReference type="GO" id="GO:0005509">
    <property type="term" value="F:calcium ion binding"/>
    <property type="evidence" value="ECO:0007669"/>
    <property type="project" value="InterPro"/>
</dbReference>
<dbReference type="GO" id="GO:0004252">
    <property type="term" value="F:serine-type endopeptidase activity"/>
    <property type="evidence" value="ECO:0007669"/>
    <property type="project" value="UniProtKB-EC"/>
</dbReference>
<dbReference type="GO" id="GO:0007596">
    <property type="term" value="P:blood coagulation"/>
    <property type="evidence" value="ECO:0007669"/>
    <property type="project" value="UniProtKB-KW"/>
</dbReference>
<dbReference type="GO" id="GO:0035807">
    <property type="term" value="P:induction of blood coagulation in another organism"/>
    <property type="evidence" value="ECO:0007669"/>
    <property type="project" value="UniProtKB-ARBA"/>
</dbReference>
<dbReference type="GO" id="GO:0006508">
    <property type="term" value="P:proteolysis"/>
    <property type="evidence" value="ECO:0007669"/>
    <property type="project" value="UniProtKB-KW"/>
</dbReference>
<dbReference type="GO" id="GO:0044469">
    <property type="term" value="P:venom-mediated blood coagulation"/>
    <property type="evidence" value="ECO:0007669"/>
    <property type="project" value="UniProtKB-ARBA"/>
</dbReference>
<dbReference type="CDD" id="cd00054">
    <property type="entry name" value="EGF_CA"/>
    <property type="match status" value="1"/>
</dbReference>
<dbReference type="CDD" id="cd00190">
    <property type="entry name" value="Tryp_SPc"/>
    <property type="match status" value="1"/>
</dbReference>
<dbReference type="FunFam" id="2.10.25.10:FF:000513">
    <property type="entry name" value="Coagulation factor VII"/>
    <property type="match status" value="1"/>
</dbReference>
<dbReference type="FunFam" id="2.40.10.10:FF:000013">
    <property type="entry name" value="Coagulation factor X"/>
    <property type="match status" value="1"/>
</dbReference>
<dbReference type="FunFam" id="2.10.25.10:FF:000162">
    <property type="entry name" value="Coagulation factor X (Predicted)"/>
    <property type="match status" value="1"/>
</dbReference>
<dbReference type="FunFam" id="4.10.740.10:FF:000001">
    <property type="entry name" value="vitamin K-dependent protein S"/>
    <property type="match status" value="1"/>
</dbReference>
<dbReference type="Gene3D" id="4.10.740.10">
    <property type="entry name" value="Coagulation Factor IX"/>
    <property type="match status" value="1"/>
</dbReference>
<dbReference type="Gene3D" id="2.10.25.10">
    <property type="entry name" value="Laminin"/>
    <property type="match status" value="2"/>
</dbReference>
<dbReference type="Gene3D" id="2.40.10.10">
    <property type="entry name" value="Trypsin-like serine proteases"/>
    <property type="match status" value="2"/>
</dbReference>
<dbReference type="InterPro" id="IPR017857">
    <property type="entry name" value="Coagulation_fac-like_Gla_dom"/>
</dbReference>
<dbReference type="InterPro" id="IPR001881">
    <property type="entry name" value="EGF-like_Ca-bd_dom"/>
</dbReference>
<dbReference type="InterPro" id="IPR000742">
    <property type="entry name" value="EGF-like_dom"/>
</dbReference>
<dbReference type="InterPro" id="IPR000152">
    <property type="entry name" value="EGF-type_Asp/Asn_hydroxyl_site"/>
</dbReference>
<dbReference type="InterPro" id="IPR018097">
    <property type="entry name" value="EGF_Ca-bd_CS"/>
</dbReference>
<dbReference type="InterPro" id="IPR035972">
    <property type="entry name" value="GLA-like_dom_SF"/>
</dbReference>
<dbReference type="InterPro" id="IPR000294">
    <property type="entry name" value="GLA_domain"/>
</dbReference>
<dbReference type="InterPro" id="IPR009030">
    <property type="entry name" value="Growth_fac_rcpt_cys_sf"/>
</dbReference>
<dbReference type="InterPro" id="IPR012224">
    <property type="entry name" value="Pept_S1A_FX"/>
</dbReference>
<dbReference type="InterPro" id="IPR050442">
    <property type="entry name" value="Peptidase_S1_coag_factors"/>
</dbReference>
<dbReference type="InterPro" id="IPR009003">
    <property type="entry name" value="Peptidase_S1_PA"/>
</dbReference>
<dbReference type="InterPro" id="IPR043504">
    <property type="entry name" value="Peptidase_S1_PA_chymotrypsin"/>
</dbReference>
<dbReference type="InterPro" id="IPR001314">
    <property type="entry name" value="Peptidase_S1A"/>
</dbReference>
<dbReference type="InterPro" id="IPR001254">
    <property type="entry name" value="Trypsin_dom"/>
</dbReference>
<dbReference type="InterPro" id="IPR018114">
    <property type="entry name" value="TRYPSIN_HIS"/>
</dbReference>
<dbReference type="InterPro" id="IPR033116">
    <property type="entry name" value="TRYPSIN_SER"/>
</dbReference>
<dbReference type="PANTHER" id="PTHR24278">
    <property type="entry name" value="COAGULATION FACTOR"/>
    <property type="match status" value="1"/>
</dbReference>
<dbReference type="PANTHER" id="PTHR24278:SF28">
    <property type="entry name" value="COAGULATION FACTOR X"/>
    <property type="match status" value="1"/>
</dbReference>
<dbReference type="Pfam" id="PF00008">
    <property type="entry name" value="EGF"/>
    <property type="match status" value="1"/>
</dbReference>
<dbReference type="Pfam" id="PF14670">
    <property type="entry name" value="FXa_inhibition"/>
    <property type="match status" value="1"/>
</dbReference>
<dbReference type="Pfam" id="PF00594">
    <property type="entry name" value="Gla"/>
    <property type="match status" value="1"/>
</dbReference>
<dbReference type="Pfam" id="PF00089">
    <property type="entry name" value="Trypsin"/>
    <property type="match status" value="1"/>
</dbReference>
<dbReference type="PIRSF" id="PIRSF001143">
    <property type="entry name" value="Factor_X"/>
    <property type="match status" value="1"/>
</dbReference>
<dbReference type="PRINTS" id="PR00722">
    <property type="entry name" value="CHYMOTRYPSIN"/>
</dbReference>
<dbReference type="PRINTS" id="PR00010">
    <property type="entry name" value="EGFBLOOD"/>
</dbReference>
<dbReference type="PRINTS" id="PR00001">
    <property type="entry name" value="GLABLOOD"/>
</dbReference>
<dbReference type="SMART" id="SM00181">
    <property type="entry name" value="EGF"/>
    <property type="match status" value="2"/>
</dbReference>
<dbReference type="SMART" id="SM00179">
    <property type="entry name" value="EGF_CA"/>
    <property type="match status" value="1"/>
</dbReference>
<dbReference type="SMART" id="SM00069">
    <property type="entry name" value="GLA"/>
    <property type="match status" value="1"/>
</dbReference>
<dbReference type="SMART" id="SM00020">
    <property type="entry name" value="Tryp_SPc"/>
    <property type="match status" value="1"/>
</dbReference>
<dbReference type="SUPFAM" id="SSF57630">
    <property type="entry name" value="GLA-domain"/>
    <property type="match status" value="1"/>
</dbReference>
<dbReference type="SUPFAM" id="SSF57184">
    <property type="entry name" value="Growth factor receptor domain"/>
    <property type="match status" value="1"/>
</dbReference>
<dbReference type="SUPFAM" id="SSF50494">
    <property type="entry name" value="Trypsin-like serine proteases"/>
    <property type="match status" value="1"/>
</dbReference>
<dbReference type="PROSITE" id="PS00010">
    <property type="entry name" value="ASX_HYDROXYL"/>
    <property type="match status" value="1"/>
</dbReference>
<dbReference type="PROSITE" id="PS00022">
    <property type="entry name" value="EGF_1"/>
    <property type="match status" value="1"/>
</dbReference>
<dbReference type="PROSITE" id="PS01186">
    <property type="entry name" value="EGF_2"/>
    <property type="match status" value="1"/>
</dbReference>
<dbReference type="PROSITE" id="PS50026">
    <property type="entry name" value="EGF_3"/>
    <property type="match status" value="1"/>
</dbReference>
<dbReference type="PROSITE" id="PS01187">
    <property type="entry name" value="EGF_CA"/>
    <property type="match status" value="1"/>
</dbReference>
<dbReference type="PROSITE" id="PS00011">
    <property type="entry name" value="GLA_1"/>
    <property type="match status" value="1"/>
</dbReference>
<dbReference type="PROSITE" id="PS50998">
    <property type="entry name" value="GLA_2"/>
    <property type="match status" value="1"/>
</dbReference>
<dbReference type="PROSITE" id="PS50240">
    <property type="entry name" value="TRYPSIN_DOM"/>
    <property type="match status" value="1"/>
</dbReference>
<dbReference type="PROSITE" id="PS00134">
    <property type="entry name" value="TRYPSIN_HIS"/>
    <property type="match status" value="1"/>
</dbReference>
<dbReference type="PROSITE" id="PS00135">
    <property type="entry name" value="TRYPSIN_SER"/>
    <property type="match status" value="1"/>
</dbReference>
<proteinExistence type="evidence at transcript level"/>
<sequence length="483" mass="53858">MAPQLLLCLILTFLWSLPEAESNVFLKSKVANRFLQRTKRANSLFEEFKSGNIERECIEERCSKEEAREAFEDDEKTETFWNVYVDGDQCSSNPCHYGGTCKDGIGSYTCTCLSGYEGKNCEYVLYKSCRVDNGDCWHFCKPVQNGIQCSCAESYLLGEDGHSCVAGGDFSCGRNIKTRNKREANLPDFQTDFSDDYDEIDENNFVETPTNFSGLVLTVQSQNATLLKKSDNPSPDIRVVNGTDCKLGECPWQALLLNDEGDGFCGGTILSPIYVLTAAHCINQTKYITVVVGEIDISSKKTGRLHSVDKIYVHQKFVPATYDYDIAIIQLKTPIQFSENVVPACLPTADFANQVLMKQNFGIVSGFGRTRERGKTSNTLKVVTLPYVDRHTCMLSSNFPITQNMFCAGYDTLPQDACQGDSGGPHITAYRDTHFITGIVSWGEGCAQTGKYGVYTKVSKFILWIKRIIRQKQPSTESSTGRL</sequence>
<name>FA101_PSETE</name>